<proteinExistence type="inferred from homology"/>
<dbReference type="EMBL" id="CP000481">
    <property type="protein sequence ID" value="ABK52106.1"/>
    <property type="molecule type" value="Genomic_DNA"/>
</dbReference>
<dbReference type="RefSeq" id="WP_011719169.1">
    <property type="nucleotide sequence ID" value="NC_008578.1"/>
</dbReference>
<dbReference type="SMR" id="A0LRP6"/>
<dbReference type="FunCoup" id="A0LRP6">
    <property type="interactions" value="324"/>
</dbReference>
<dbReference type="STRING" id="351607.Acel_0332"/>
<dbReference type="KEGG" id="ace:Acel_0332"/>
<dbReference type="eggNOG" id="COG0100">
    <property type="taxonomic scope" value="Bacteria"/>
</dbReference>
<dbReference type="HOGENOM" id="CLU_072439_5_0_11"/>
<dbReference type="InParanoid" id="A0LRP6"/>
<dbReference type="OrthoDB" id="9806415at2"/>
<dbReference type="Proteomes" id="UP000008221">
    <property type="component" value="Chromosome"/>
</dbReference>
<dbReference type="GO" id="GO:1990904">
    <property type="term" value="C:ribonucleoprotein complex"/>
    <property type="evidence" value="ECO:0007669"/>
    <property type="project" value="UniProtKB-KW"/>
</dbReference>
<dbReference type="GO" id="GO:0005840">
    <property type="term" value="C:ribosome"/>
    <property type="evidence" value="ECO:0007669"/>
    <property type="project" value="UniProtKB-KW"/>
</dbReference>
<dbReference type="GO" id="GO:0019843">
    <property type="term" value="F:rRNA binding"/>
    <property type="evidence" value="ECO:0007669"/>
    <property type="project" value="UniProtKB-UniRule"/>
</dbReference>
<dbReference type="GO" id="GO:0003735">
    <property type="term" value="F:structural constituent of ribosome"/>
    <property type="evidence" value="ECO:0007669"/>
    <property type="project" value="InterPro"/>
</dbReference>
<dbReference type="GO" id="GO:0006412">
    <property type="term" value="P:translation"/>
    <property type="evidence" value="ECO:0007669"/>
    <property type="project" value="UniProtKB-UniRule"/>
</dbReference>
<dbReference type="FunFam" id="3.30.420.80:FF:000001">
    <property type="entry name" value="30S ribosomal protein S11"/>
    <property type="match status" value="1"/>
</dbReference>
<dbReference type="Gene3D" id="3.30.420.80">
    <property type="entry name" value="Ribosomal protein S11"/>
    <property type="match status" value="1"/>
</dbReference>
<dbReference type="HAMAP" id="MF_01310">
    <property type="entry name" value="Ribosomal_uS11"/>
    <property type="match status" value="1"/>
</dbReference>
<dbReference type="InterPro" id="IPR001971">
    <property type="entry name" value="Ribosomal_uS11"/>
</dbReference>
<dbReference type="InterPro" id="IPR019981">
    <property type="entry name" value="Ribosomal_uS11_bac-type"/>
</dbReference>
<dbReference type="InterPro" id="IPR018102">
    <property type="entry name" value="Ribosomal_uS11_CS"/>
</dbReference>
<dbReference type="InterPro" id="IPR036967">
    <property type="entry name" value="Ribosomal_uS11_sf"/>
</dbReference>
<dbReference type="NCBIfam" id="NF003698">
    <property type="entry name" value="PRK05309.1"/>
    <property type="match status" value="1"/>
</dbReference>
<dbReference type="NCBIfam" id="TIGR03632">
    <property type="entry name" value="uS11_bact"/>
    <property type="match status" value="1"/>
</dbReference>
<dbReference type="PANTHER" id="PTHR11759">
    <property type="entry name" value="40S RIBOSOMAL PROTEIN S14/30S RIBOSOMAL PROTEIN S11"/>
    <property type="match status" value="1"/>
</dbReference>
<dbReference type="Pfam" id="PF00411">
    <property type="entry name" value="Ribosomal_S11"/>
    <property type="match status" value="1"/>
</dbReference>
<dbReference type="PIRSF" id="PIRSF002131">
    <property type="entry name" value="Ribosomal_S11"/>
    <property type="match status" value="1"/>
</dbReference>
<dbReference type="SUPFAM" id="SSF53137">
    <property type="entry name" value="Translational machinery components"/>
    <property type="match status" value="1"/>
</dbReference>
<dbReference type="PROSITE" id="PS00054">
    <property type="entry name" value="RIBOSOMAL_S11"/>
    <property type="match status" value="1"/>
</dbReference>
<sequence>MPPKTRSQTGAKKVRRKEKKNVAHGHAHIKSTFNNTIVSITDPSGAVIAWASAGQVGFKGSRKSTPFAAQMTAEAAARRAQEHGMRKVDVFVKGPGSGRETAIRSLQAVGLEVGSIQDVTPVPHNGCRPPKRRRV</sequence>
<evidence type="ECO:0000255" key="1">
    <source>
        <dbReference type="HAMAP-Rule" id="MF_01310"/>
    </source>
</evidence>
<evidence type="ECO:0000256" key="2">
    <source>
        <dbReference type="SAM" id="MobiDB-lite"/>
    </source>
</evidence>
<evidence type="ECO:0000305" key="3"/>
<feature type="chain" id="PRO_0000294702" description="Small ribosomal subunit protein uS11">
    <location>
        <begin position="1"/>
        <end position="135"/>
    </location>
</feature>
<feature type="region of interest" description="Disordered" evidence="2">
    <location>
        <begin position="1"/>
        <end position="28"/>
    </location>
</feature>
<feature type="compositionally biased region" description="Polar residues" evidence="2">
    <location>
        <begin position="1"/>
        <end position="10"/>
    </location>
</feature>
<feature type="compositionally biased region" description="Basic residues" evidence="2">
    <location>
        <begin position="12"/>
        <end position="28"/>
    </location>
</feature>
<comment type="function">
    <text evidence="1">Located on the platform of the 30S subunit, it bridges several disparate RNA helices of the 16S rRNA. Forms part of the Shine-Dalgarno cleft in the 70S ribosome.</text>
</comment>
<comment type="subunit">
    <text evidence="1">Part of the 30S ribosomal subunit. Interacts with proteins S7 and S18. Binds to IF-3.</text>
</comment>
<comment type="similarity">
    <text evidence="1">Belongs to the universal ribosomal protein uS11 family.</text>
</comment>
<gene>
    <name evidence="1" type="primary">rpsK</name>
    <name type="ordered locus">Acel_0332</name>
</gene>
<organism>
    <name type="scientific">Acidothermus cellulolyticus (strain ATCC 43068 / DSM 8971 / 11B)</name>
    <dbReference type="NCBI Taxonomy" id="351607"/>
    <lineage>
        <taxon>Bacteria</taxon>
        <taxon>Bacillati</taxon>
        <taxon>Actinomycetota</taxon>
        <taxon>Actinomycetes</taxon>
        <taxon>Acidothermales</taxon>
        <taxon>Acidothermaceae</taxon>
        <taxon>Acidothermus</taxon>
    </lineage>
</organism>
<name>RS11_ACIC1</name>
<accession>A0LRP6</accession>
<keyword id="KW-1185">Reference proteome</keyword>
<keyword id="KW-0687">Ribonucleoprotein</keyword>
<keyword id="KW-0689">Ribosomal protein</keyword>
<keyword id="KW-0694">RNA-binding</keyword>
<keyword id="KW-0699">rRNA-binding</keyword>
<protein>
    <recommendedName>
        <fullName evidence="1">Small ribosomal subunit protein uS11</fullName>
    </recommendedName>
    <alternativeName>
        <fullName evidence="3">30S ribosomal protein S11</fullName>
    </alternativeName>
</protein>
<reference key="1">
    <citation type="journal article" date="2009" name="Genome Res.">
        <title>Complete genome of the cellulolytic thermophile Acidothermus cellulolyticus 11B provides insights into its ecophysiological and evolutionary adaptations.</title>
        <authorList>
            <person name="Barabote R.D."/>
            <person name="Xie G."/>
            <person name="Leu D.H."/>
            <person name="Normand P."/>
            <person name="Necsulea A."/>
            <person name="Daubin V."/>
            <person name="Medigue C."/>
            <person name="Adney W.S."/>
            <person name="Xu X.C."/>
            <person name="Lapidus A."/>
            <person name="Parales R.E."/>
            <person name="Detter C."/>
            <person name="Pujic P."/>
            <person name="Bruce D."/>
            <person name="Lavire C."/>
            <person name="Challacombe J.F."/>
            <person name="Brettin T.S."/>
            <person name="Berry A.M."/>
        </authorList>
    </citation>
    <scope>NUCLEOTIDE SEQUENCE [LARGE SCALE GENOMIC DNA]</scope>
    <source>
        <strain>ATCC 43068 / DSM 8971 / 11B</strain>
    </source>
</reference>